<dbReference type="EC" id="3.1.26.3" evidence="1"/>
<dbReference type="EMBL" id="AE009442">
    <property type="protein sequence ID" value="AAO29139.1"/>
    <property type="molecule type" value="Genomic_DNA"/>
</dbReference>
<dbReference type="RefSeq" id="WP_004088291.1">
    <property type="nucleotide sequence ID" value="NC_004556.1"/>
</dbReference>
<dbReference type="SMR" id="Q87C06"/>
<dbReference type="GeneID" id="93905104"/>
<dbReference type="KEGG" id="xft:PD_1290"/>
<dbReference type="HOGENOM" id="CLU_000907_1_1_6"/>
<dbReference type="Proteomes" id="UP000002516">
    <property type="component" value="Chromosome"/>
</dbReference>
<dbReference type="GO" id="GO:0005737">
    <property type="term" value="C:cytoplasm"/>
    <property type="evidence" value="ECO:0007669"/>
    <property type="project" value="UniProtKB-SubCell"/>
</dbReference>
<dbReference type="GO" id="GO:0003725">
    <property type="term" value="F:double-stranded RNA binding"/>
    <property type="evidence" value="ECO:0007669"/>
    <property type="project" value="TreeGrafter"/>
</dbReference>
<dbReference type="GO" id="GO:0046872">
    <property type="term" value="F:metal ion binding"/>
    <property type="evidence" value="ECO:0007669"/>
    <property type="project" value="UniProtKB-KW"/>
</dbReference>
<dbReference type="GO" id="GO:0004525">
    <property type="term" value="F:ribonuclease III activity"/>
    <property type="evidence" value="ECO:0007669"/>
    <property type="project" value="UniProtKB-UniRule"/>
</dbReference>
<dbReference type="GO" id="GO:0019843">
    <property type="term" value="F:rRNA binding"/>
    <property type="evidence" value="ECO:0007669"/>
    <property type="project" value="UniProtKB-KW"/>
</dbReference>
<dbReference type="GO" id="GO:0006397">
    <property type="term" value="P:mRNA processing"/>
    <property type="evidence" value="ECO:0007669"/>
    <property type="project" value="UniProtKB-UniRule"/>
</dbReference>
<dbReference type="GO" id="GO:0010468">
    <property type="term" value="P:regulation of gene expression"/>
    <property type="evidence" value="ECO:0007669"/>
    <property type="project" value="TreeGrafter"/>
</dbReference>
<dbReference type="GO" id="GO:0006364">
    <property type="term" value="P:rRNA processing"/>
    <property type="evidence" value="ECO:0007669"/>
    <property type="project" value="UniProtKB-UniRule"/>
</dbReference>
<dbReference type="GO" id="GO:0008033">
    <property type="term" value="P:tRNA processing"/>
    <property type="evidence" value="ECO:0007669"/>
    <property type="project" value="UniProtKB-KW"/>
</dbReference>
<dbReference type="CDD" id="cd10845">
    <property type="entry name" value="DSRM_RNAse_III_family"/>
    <property type="match status" value="1"/>
</dbReference>
<dbReference type="CDD" id="cd00593">
    <property type="entry name" value="RIBOc"/>
    <property type="match status" value="1"/>
</dbReference>
<dbReference type="FunFam" id="1.10.1520.10:FF:000001">
    <property type="entry name" value="Ribonuclease 3"/>
    <property type="match status" value="1"/>
</dbReference>
<dbReference type="FunFam" id="3.30.160.20:FF:000003">
    <property type="entry name" value="Ribonuclease 3"/>
    <property type="match status" value="1"/>
</dbReference>
<dbReference type="Gene3D" id="3.30.160.20">
    <property type="match status" value="1"/>
</dbReference>
<dbReference type="Gene3D" id="1.10.1520.10">
    <property type="entry name" value="Ribonuclease III domain"/>
    <property type="match status" value="1"/>
</dbReference>
<dbReference type="HAMAP" id="MF_00104">
    <property type="entry name" value="RNase_III"/>
    <property type="match status" value="1"/>
</dbReference>
<dbReference type="InterPro" id="IPR014720">
    <property type="entry name" value="dsRBD_dom"/>
</dbReference>
<dbReference type="InterPro" id="IPR011907">
    <property type="entry name" value="RNase_III"/>
</dbReference>
<dbReference type="InterPro" id="IPR000999">
    <property type="entry name" value="RNase_III_dom"/>
</dbReference>
<dbReference type="InterPro" id="IPR036389">
    <property type="entry name" value="RNase_III_sf"/>
</dbReference>
<dbReference type="NCBIfam" id="TIGR02191">
    <property type="entry name" value="RNaseIII"/>
    <property type="match status" value="1"/>
</dbReference>
<dbReference type="PANTHER" id="PTHR11207:SF0">
    <property type="entry name" value="RIBONUCLEASE 3"/>
    <property type="match status" value="1"/>
</dbReference>
<dbReference type="PANTHER" id="PTHR11207">
    <property type="entry name" value="RIBONUCLEASE III"/>
    <property type="match status" value="1"/>
</dbReference>
<dbReference type="Pfam" id="PF00035">
    <property type="entry name" value="dsrm"/>
    <property type="match status" value="1"/>
</dbReference>
<dbReference type="Pfam" id="PF14622">
    <property type="entry name" value="Ribonucleas_3_3"/>
    <property type="match status" value="1"/>
</dbReference>
<dbReference type="SMART" id="SM00358">
    <property type="entry name" value="DSRM"/>
    <property type="match status" value="1"/>
</dbReference>
<dbReference type="SMART" id="SM00535">
    <property type="entry name" value="RIBOc"/>
    <property type="match status" value="1"/>
</dbReference>
<dbReference type="SUPFAM" id="SSF54768">
    <property type="entry name" value="dsRNA-binding domain-like"/>
    <property type="match status" value="1"/>
</dbReference>
<dbReference type="SUPFAM" id="SSF69065">
    <property type="entry name" value="RNase III domain-like"/>
    <property type="match status" value="1"/>
</dbReference>
<dbReference type="PROSITE" id="PS50137">
    <property type="entry name" value="DS_RBD"/>
    <property type="match status" value="1"/>
</dbReference>
<dbReference type="PROSITE" id="PS00517">
    <property type="entry name" value="RNASE_3_1"/>
    <property type="match status" value="1"/>
</dbReference>
<dbReference type="PROSITE" id="PS50142">
    <property type="entry name" value="RNASE_3_2"/>
    <property type="match status" value="1"/>
</dbReference>
<reference key="1">
    <citation type="journal article" date="2003" name="J. Bacteriol.">
        <title>Comparative analyses of the complete genome sequences of Pierce's disease and citrus variegated chlorosis strains of Xylella fastidiosa.</title>
        <authorList>
            <person name="Van Sluys M.A."/>
            <person name="de Oliveira M.C."/>
            <person name="Monteiro-Vitorello C.B."/>
            <person name="Miyaki C.Y."/>
            <person name="Furlan L.R."/>
            <person name="Camargo L.E.A."/>
            <person name="da Silva A.C.R."/>
            <person name="Moon D.H."/>
            <person name="Takita M.A."/>
            <person name="Lemos E.G.M."/>
            <person name="Machado M.A."/>
            <person name="Ferro M.I.T."/>
            <person name="da Silva F.R."/>
            <person name="Goldman M.H.S."/>
            <person name="Goldman G.H."/>
            <person name="Lemos M.V.F."/>
            <person name="El-Dorry H."/>
            <person name="Tsai S.M."/>
            <person name="Carrer H."/>
            <person name="Carraro D.M."/>
            <person name="de Oliveira R.C."/>
            <person name="Nunes L.R."/>
            <person name="Siqueira W.J."/>
            <person name="Coutinho L.L."/>
            <person name="Kimura E.T."/>
            <person name="Ferro E.S."/>
            <person name="Harakava R."/>
            <person name="Kuramae E.E."/>
            <person name="Marino C.L."/>
            <person name="Giglioti E."/>
            <person name="Abreu I.L."/>
            <person name="Alves L.M.C."/>
            <person name="do Amaral A.M."/>
            <person name="Baia G.S."/>
            <person name="Blanco S.R."/>
            <person name="Brito M.S."/>
            <person name="Cannavan F.S."/>
            <person name="Celestino A.V."/>
            <person name="da Cunha A.F."/>
            <person name="Fenille R.C."/>
            <person name="Ferro J.A."/>
            <person name="Formighieri E.F."/>
            <person name="Kishi L.T."/>
            <person name="Leoni S.G."/>
            <person name="Oliveira A.R."/>
            <person name="Rosa V.E. Jr."/>
            <person name="Sassaki F.T."/>
            <person name="Sena J.A.D."/>
            <person name="de Souza A.A."/>
            <person name="Truffi D."/>
            <person name="Tsukumo F."/>
            <person name="Yanai G.M."/>
            <person name="Zaros L.G."/>
            <person name="Civerolo E.L."/>
            <person name="Simpson A.J.G."/>
            <person name="Almeida N.F. Jr."/>
            <person name="Setubal J.C."/>
            <person name="Kitajima J.P."/>
        </authorList>
    </citation>
    <scope>NUCLEOTIDE SEQUENCE [LARGE SCALE GENOMIC DNA]</scope>
    <source>
        <strain>Temecula1 / ATCC 700964</strain>
    </source>
</reference>
<organism>
    <name type="scientific">Xylella fastidiosa (strain Temecula1 / ATCC 700964)</name>
    <dbReference type="NCBI Taxonomy" id="183190"/>
    <lineage>
        <taxon>Bacteria</taxon>
        <taxon>Pseudomonadati</taxon>
        <taxon>Pseudomonadota</taxon>
        <taxon>Gammaproteobacteria</taxon>
        <taxon>Lysobacterales</taxon>
        <taxon>Lysobacteraceae</taxon>
        <taxon>Xylella</taxon>
    </lineage>
</organism>
<gene>
    <name evidence="1" type="primary">rnc</name>
    <name type="ordered locus">PD_1290</name>
</gene>
<proteinExistence type="inferred from homology"/>
<name>RNC_XYLFT</name>
<feature type="chain" id="PRO_0000180460" description="Ribonuclease 3">
    <location>
        <begin position="1"/>
        <end position="227"/>
    </location>
</feature>
<feature type="domain" description="RNase III" evidence="1">
    <location>
        <begin position="6"/>
        <end position="128"/>
    </location>
</feature>
<feature type="domain" description="DRBM" evidence="1">
    <location>
        <begin position="155"/>
        <end position="225"/>
    </location>
</feature>
<feature type="region of interest" description="Disordered" evidence="2">
    <location>
        <begin position="203"/>
        <end position="227"/>
    </location>
</feature>
<feature type="compositionally biased region" description="Basic and acidic residues" evidence="2">
    <location>
        <begin position="203"/>
        <end position="212"/>
    </location>
</feature>
<feature type="active site" evidence="1">
    <location>
        <position position="45"/>
    </location>
</feature>
<feature type="active site" evidence="1">
    <location>
        <position position="117"/>
    </location>
</feature>
<feature type="binding site" evidence="1">
    <location>
        <position position="41"/>
    </location>
    <ligand>
        <name>Mg(2+)</name>
        <dbReference type="ChEBI" id="CHEBI:18420"/>
    </ligand>
</feature>
<feature type="binding site" evidence="1">
    <location>
        <position position="114"/>
    </location>
    <ligand>
        <name>Mg(2+)</name>
        <dbReference type="ChEBI" id="CHEBI:18420"/>
    </ligand>
</feature>
<feature type="binding site" evidence="1">
    <location>
        <position position="117"/>
    </location>
    <ligand>
        <name>Mg(2+)</name>
        <dbReference type="ChEBI" id="CHEBI:18420"/>
    </ligand>
</feature>
<keyword id="KW-0963">Cytoplasm</keyword>
<keyword id="KW-0255">Endonuclease</keyword>
<keyword id="KW-0378">Hydrolase</keyword>
<keyword id="KW-0460">Magnesium</keyword>
<keyword id="KW-0479">Metal-binding</keyword>
<keyword id="KW-0507">mRNA processing</keyword>
<keyword id="KW-0540">Nuclease</keyword>
<keyword id="KW-1185">Reference proteome</keyword>
<keyword id="KW-0694">RNA-binding</keyword>
<keyword id="KW-0698">rRNA processing</keyword>
<keyword id="KW-0699">rRNA-binding</keyword>
<keyword id="KW-0819">tRNA processing</keyword>
<comment type="function">
    <text evidence="1">Digests double-stranded RNA. Involved in the processing of primary rRNA transcript to yield the immediate precursors to the large and small rRNAs (23S and 16S). Processes some mRNAs, and tRNAs when they are encoded in the rRNA operon. Processes pre-crRNA and tracrRNA of type II CRISPR loci if present in the organism.</text>
</comment>
<comment type="catalytic activity">
    <reaction evidence="1">
        <text>Endonucleolytic cleavage to 5'-phosphomonoester.</text>
        <dbReference type="EC" id="3.1.26.3"/>
    </reaction>
</comment>
<comment type="cofactor">
    <cofactor evidence="1">
        <name>Mg(2+)</name>
        <dbReference type="ChEBI" id="CHEBI:18420"/>
    </cofactor>
</comment>
<comment type="subunit">
    <text evidence="1">Homodimer.</text>
</comment>
<comment type="subcellular location">
    <subcellularLocation>
        <location evidence="1">Cytoplasm</location>
    </subcellularLocation>
</comment>
<comment type="similarity">
    <text evidence="1">Belongs to the ribonuclease III family.</text>
</comment>
<protein>
    <recommendedName>
        <fullName evidence="1">Ribonuclease 3</fullName>
        <ecNumber evidence="1">3.1.26.3</ecNumber>
    </recommendedName>
    <alternativeName>
        <fullName evidence="1">Ribonuclease III</fullName>
        <shortName evidence="1">RNase III</shortName>
    </alternativeName>
</protein>
<evidence type="ECO:0000255" key="1">
    <source>
        <dbReference type="HAMAP-Rule" id="MF_00104"/>
    </source>
</evidence>
<evidence type="ECO:0000256" key="2">
    <source>
        <dbReference type="SAM" id="MobiDB-lite"/>
    </source>
</evidence>
<sequence length="227" mass="25243">MISSKASDYQQRIGYVFTDPSLLLQALRHRSAGTPHNERLEFLGDSVVNLLIAEALFQRWPRADEGALTRARSELVRETSLASIARTMQLGEQLILGPGELKSGGHRRDSILADAVEAVIAAIYLDADLATCRTVVLPWFETALTALPVGKPEKDPKTRLQEWLQARQWSLPVYELIFESGDPHTKHFRVSCTLGELKLRTEGEGSSRRLAEQDAASHAIDQLDSNK</sequence>
<accession>Q87C06</accession>